<evidence type="ECO:0000250" key="1">
    <source>
        <dbReference type="UniProtKB" id="B7UP20"/>
    </source>
</evidence>
<evidence type="ECO:0000250" key="2">
    <source>
        <dbReference type="UniProtKB" id="O53604"/>
    </source>
</evidence>
<evidence type="ECO:0000255" key="3">
    <source>
        <dbReference type="PROSITE-ProRule" id="PRU01362"/>
    </source>
</evidence>
<evidence type="ECO:0000269" key="4">
    <source>
    </source>
</evidence>
<evidence type="ECO:0000303" key="5">
    <source>
    </source>
</evidence>
<evidence type="ECO:0000305" key="6">
    <source>
    </source>
</evidence>
<evidence type="ECO:0000312" key="7">
    <source>
        <dbReference type="EMBL" id="KHG66095.1"/>
    </source>
</evidence>
<evidence type="ECO:0007744" key="8">
    <source>
        <dbReference type="PDB" id="7OMV"/>
    </source>
</evidence>
<evidence type="ECO:0007744" key="9">
    <source>
        <dbReference type="PDB" id="7OMW"/>
    </source>
</evidence>
<evidence type="ECO:0007744" key="10">
    <source>
        <dbReference type="PDB" id="7OMX"/>
    </source>
</evidence>
<evidence type="ECO:0007744" key="11">
    <source>
        <dbReference type="PDB" id="7OMY"/>
    </source>
</evidence>
<reference evidence="7" key="1">
    <citation type="journal article" date="2015" name="Genome Announc.">
        <title>Draft Genome Sequence of Thermus sp. Isolate 2.9, Obtained from a Hot Water Spring Located in Salta, Argentina.</title>
        <authorList>
            <person name="Navas L.E."/>
            <person name="Berretta M.F."/>
            <person name="Ortiz E.M."/>
            <person name="Benintende G.B."/>
            <person name="Amadio A.F."/>
            <person name="Zandomeni R.O."/>
        </authorList>
    </citation>
    <scope>NUCLEOTIDE SEQUENCE [LARGE SCALE GENOMIC DNA]</scope>
    <source>
        <strain evidence="7">2.9</strain>
    </source>
</reference>
<reference evidence="8 9 10" key="2">
    <citation type="journal article" date="2021" name="Nature">
        <title>Molecular basis for DarT ADP-ribosylation of a DNA base.</title>
        <authorList>
            <person name="Schuller M."/>
            <person name="Butler R.E."/>
            <person name="Ariza A."/>
            <person name="Tromans-Coia C."/>
            <person name="Jankevicius G."/>
            <person name="Claridge T.D.W."/>
            <person name="Kendall S.L."/>
            <person name="Goh S."/>
            <person name="Stewart G.R."/>
            <person name="Ahel I."/>
        </authorList>
    </citation>
    <scope>X-RAY CRYSTALLOGRAPHY (1.29 ANGSTROMS) ALONE AND IN COMPLEX WITH NAD+ WITH AND WITHOUT DNA</scope>
    <scope>FUNCTION</scope>
    <scope>CATALYTIC ACTIVITY</scope>
    <scope>SUBSTRATE SPECIFICITY</scope>
    <scope>POSSIBLE REACTION MECHANISM</scope>
    <scope>DOMAIN</scope>
    <scope>ACTIVE SITE</scope>
    <scope>MUTAGENESIS OF ARG-154 AND GLU-160</scope>
    <scope>DNA-BINDING</scope>
</reference>
<protein>
    <recommendedName>
        <fullName evidence="5">DNA ADP-ribosyl transferase</fullName>
        <shortName evidence="5">DarT</shortName>
        <ecNumber evidence="4">2.4.2.-</ecNumber>
    </recommendedName>
    <alternativeName>
        <fullName evidence="5">Toxin DarT</fullName>
    </alternativeName>
</protein>
<name>DART_THES0</name>
<feature type="chain" id="PRO_0000456052" description="DNA ADP-ribosyl transferase">
    <location>
        <begin position="1"/>
        <end position="209"/>
    </location>
</feature>
<feature type="domain" description="DarT" evidence="3">
    <location>
        <begin position="9"/>
        <end position="209"/>
    </location>
</feature>
<feature type="DNA-binding region" evidence="4 11">
    <location>
        <begin position="44"/>
        <end position="50"/>
    </location>
</feature>
<feature type="DNA-binding region" evidence="4 11">
    <location>
        <begin position="75"/>
        <end position="80"/>
    </location>
</feature>
<feature type="DNA-binding region" evidence="4 11">
    <location>
        <begin position="145"/>
        <end position="148"/>
    </location>
</feature>
<feature type="DNA-binding region" evidence="4 11">
    <location>
        <begin position="154"/>
        <end position="158"/>
    </location>
</feature>
<feature type="region of interest" description="NAD(+)-binding element" evidence="4">
    <location>
        <begin position="35"/>
        <end position="53"/>
    </location>
</feature>
<feature type="region of interest" description="ADP-ribosylating turn-turn loop" evidence="4">
    <location>
        <begin position="116"/>
        <end position="160"/>
    </location>
</feature>
<feature type="active site" description="Proton acceptor" evidence="3 6">
    <location>
        <position position="51"/>
    </location>
</feature>
<feature type="active site" evidence="3 6 11">
    <location>
        <position position="160"/>
    </location>
</feature>
<feature type="binding site" evidence="3 9">
    <location>
        <begin position="13"/>
        <end position="15"/>
    </location>
    <ligand>
        <name>NAD(+)</name>
        <dbReference type="ChEBI" id="CHEBI:57540"/>
    </ligand>
</feature>
<feature type="binding site" evidence="3 9">
    <location>
        <position position="22"/>
    </location>
    <ligand>
        <name>NAD(+)</name>
        <dbReference type="ChEBI" id="CHEBI:57540"/>
    </ligand>
</feature>
<feature type="binding site" evidence="3 9">
    <location>
        <position position="30"/>
    </location>
    <ligand>
        <name>NAD(+)</name>
        <dbReference type="ChEBI" id="CHEBI:57540"/>
    </ligand>
</feature>
<feature type="binding site" evidence="3 9">
    <location>
        <position position="51"/>
    </location>
    <ligand>
        <name>NAD(+)</name>
        <dbReference type="ChEBI" id="CHEBI:57540"/>
    </ligand>
</feature>
<feature type="site" description="Specifically recognizes first thymidine of consensus sequence 5'-TGTC-3'" evidence="4">
    <location>
        <position position="154"/>
    </location>
</feature>
<feature type="mutagenesis site" description="No longer toxic in vivo, no longer ADP-ribosylates ssDNA." evidence="4">
    <original>R</original>
    <variation>W</variation>
    <location>
        <position position="154"/>
    </location>
</feature>
<feature type="mutagenesis site" description="Nearly completely loss of DNA ADP-ribosylation." evidence="4">
    <original>E</original>
    <variation>A</variation>
    <location>
        <position position="160"/>
    </location>
</feature>
<gene>
    <name evidence="5" type="primary">darT</name>
    <name evidence="7" type="ORF">QT17_01930</name>
</gene>
<organism>
    <name type="scientific">Thermus sp. (strain 2.9)</name>
    <dbReference type="NCBI Taxonomy" id="1577051"/>
    <lineage>
        <taxon>Bacteria</taxon>
        <taxon>Thermotogati</taxon>
        <taxon>Deinococcota</taxon>
        <taxon>Deinococci</taxon>
        <taxon>Thermales</taxon>
        <taxon>Thermaceae</taxon>
        <taxon>Thermus</taxon>
    </lineage>
</organism>
<comment type="function">
    <text evidence="1 2 4">Toxic component of the hybrid type II/IV toxin-antitoxin (TA) system DarTG, which plays a crucial role in controlling bacterial growth and bacteriophage infection (By similarity). In case of phage infection, DarT toxin ADP-ribosylates DNA, which inhibits both viral DNA and RNA synthesis and leads to abortive infection (By similarity). ADP-ribosylates ssDNA on the second thymidine of the consensus sequence 5'-TNTC-3'; the protein does not auto-modify. Arg-51 is highly flexible, allowing it to assume multiple positions in the crystal structures (PubMed:34408320). Its toxic effect is neutralized by cognate antitoxin DarG (By similarity).</text>
</comment>
<comment type="catalytic activity">
    <reaction evidence="3">
        <text>a thymidine in DNA + NAD(+) = an N-(ADP-alpha-D-ribosyl)-thymidine in DNA + nicotinamide + H(+)</text>
        <dbReference type="Rhea" id="RHEA:71651"/>
        <dbReference type="Rhea" id="RHEA-COMP:13556"/>
        <dbReference type="Rhea" id="RHEA-COMP:18051"/>
        <dbReference type="ChEBI" id="CHEBI:15378"/>
        <dbReference type="ChEBI" id="CHEBI:17154"/>
        <dbReference type="ChEBI" id="CHEBI:57540"/>
        <dbReference type="ChEBI" id="CHEBI:137386"/>
        <dbReference type="ChEBI" id="CHEBI:191199"/>
    </reaction>
    <physiologicalReaction direction="left-to-right" evidence="3 4">
        <dbReference type="Rhea" id="RHEA:71652"/>
    </physiologicalReaction>
</comment>
<comment type="subunit">
    <text evidence="2">Interacts with cognate antitoxin DarG (via C-terminus); this heterodimeric complex neutralizes the toxic effect of DarT by preventing ssDNA binding to DarT and consequently inactivating the toxin by direct protein-protein interactions.</text>
</comment>
<comment type="domain">
    <text evidence="4">The NAD(+)-binding element stabilizes the ADP-ribosylating turn-turn (ARTT) loop which confers substrate specificity; both domains contribute to ssDNA-binding.</text>
</comment>
<comment type="similarity">
    <text evidence="3">Belongs to the DarT ADP-ribosyltransferase family.</text>
</comment>
<dbReference type="EC" id="2.4.2.-" evidence="4"/>
<dbReference type="EMBL" id="JTJB01000003">
    <property type="protein sequence ID" value="KHG66095.1"/>
    <property type="molecule type" value="Genomic_DNA"/>
</dbReference>
<dbReference type="RefSeq" id="WP_039455677.1">
    <property type="nucleotide sequence ID" value="NZ_JTJB01000003.1"/>
</dbReference>
<dbReference type="PDB" id="7OMV">
    <property type="method" value="X-ray"/>
    <property type="resolution" value="1.29 A"/>
    <property type="chains" value="AAA=1-209"/>
</dbReference>
<dbReference type="PDB" id="7OMW">
    <property type="method" value="X-ray"/>
    <property type="resolution" value="1.30 A"/>
    <property type="chains" value="AAA=1-209"/>
</dbReference>
<dbReference type="PDB" id="7OMX">
    <property type="method" value="X-ray"/>
    <property type="resolution" value="1.52 A"/>
    <property type="chains" value="AAA=1-209"/>
</dbReference>
<dbReference type="PDB" id="7OMY">
    <property type="method" value="X-ray"/>
    <property type="resolution" value="1.60 A"/>
    <property type="chains" value="AAA=1-209"/>
</dbReference>
<dbReference type="PDB" id="7OMZ">
    <property type="method" value="X-ray"/>
    <property type="resolution" value="1.66 A"/>
    <property type="chains" value="AAA=1-209"/>
</dbReference>
<dbReference type="PDB" id="7ON0">
    <property type="method" value="X-ray"/>
    <property type="resolution" value="1.46 A"/>
    <property type="chains" value="AAA=1-209"/>
</dbReference>
<dbReference type="PDBsum" id="7OMV"/>
<dbReference type="PDBsum" id="7OMW"/>
<dbReference type="PDBsum" id="7OMX"/>
<dbReference type="PDBsum" id="7OMY"/>
<dbReference type="PDBsum" id="7OMZ"/>
<dbReference type="PDBsum" id="7ON0"/>
<dbReference type="SMR" id="A0A0B0SG80"/>
<dbReference type="STRING" id="1577051.QT17_01930"/>
<dbReference type="OrthoDB" id="9813972at2"/>
<dbReference type="Proteomes" id="UP000030683">
    <property type="component" value="Unassembled WGS sequence"/>
</dbReference>
<dbReference type="GO" id="GO:0003677">
    <property type="term" value="F:DNA binding"/>
    <property type="evidence" value="ECO:0007669"/>
    <property type="project" value="UniProtKB-KW"/>
</dbReference>
<dbReference type="GO" id="GO:0016757">
    <property type="term" value="F:glycosyltransferase activity"/>
    <property type="evidence" value="ECO:0007669"/>
    <property type="project" value="UniProtKB-KW"/>
</dbReference>
<dbReference type="GO" id="GO:0016779">
    <property type="term" value="F:nucleotidyltransferase activity"/>
    <property type="evidence" value="ECO:0007669"/>
    <property type="project" value="UniProtKB-KW"/>
</dbReference>
<dbReference type="InterPro" id="IPR029494">
    <property type="entry name" value="DarT"/>
</dbReference>
<dbReference type="Pfam" id="PF14487">
    <property type="entry name" value="DarT"/>
    <property type="match status" value="1"/>
</dbReference>
<dbReference type="PROSITE" id="PS52018">
    <property type="entry name" value="DART"/>
    <property type="match status" value="1"/>
</dbReference>
<accession>A0A0B0SG80</accession>
<proteinExistence type="evidence at protein level"/>
<keyword id="KW-0002">3D-structure</keyword>
<keyword id="KW-0238">DNA-binding</keyword>
<keyword id="KW-0328">Glycosyltransferase</keyword>
<keyword id="KW-0548">Nucleotidyltransferase</keyword>
<keyword id="KW-1277">Toxin-antitoxin system</keyword>
<keyword id="KW-0808">Transferase</keyword>
<sequence length="209" mass="24371">MKRTYPEPTPIYHITHIDNLKGILRMGKLLAHNQSPPKQRSIAYAHIQERRNRAKVPQPPGGVLHDYVPFYFCPRSPMLYAIYSGATEYQGGQEPILHLVSSAQAVHKAGLPFVFTDRHGVLSHARFFRQLEELAQLDWEAIQASYWADPPELREKKQAEFLVYKAFPWALIEEIAVYSQRVGEEVLKILKQFPEARRPRVCIRKDWYY</sequence>